<comment type="function">
    <text evidence="2">Zinc transporter that mediates zinc uptake from the rhizosphere and may be responsible for the translocation of zinc within the plant.</text>
</comment>
<comment type="subcellular location">
    <subcellularLocation>
        <location evidence="2">Cell membrane</location>
        <topology evidence="2">Multi-pass membrane protein</topology>
    </subcellularLocation>
</comment>
<comment type="induction">
    <text evidence="2">By zinc deficiency in roots and shoots.</text>
</comment>
<comment type="disruption phenotype">
    <text evidence="2">No visible phenotype, but increased tolerance to an excess of zinc.</text>
</comment>
<comment type="miscellaneous">
    <text>Plants overexpressing ZIP5 show decreased zinc concentration in shoots, increased concentration in roots, and are sensitive to an excess of zinc.</text>
</comment>
<comment type="similarity">
    <text evidence="3">Belongs to the ZIP transporter (TC 2.A.5) family.</text>
</comment>
<sequence length="353" mass="36754">MATAAMTKVFVLLFLVAACYLPAHAAAAECDCATDTAGRDKAQALRLKVIAIFCILAGSTVGAALPSLGGRFPAIQPETDVFLSVKAFAGGVILATGLVHILPAAFEALSSPCLVGGPWKRFPFAGMVAMVSAIGTLIVDTVATGYFHRTDAKRKAAAVADEPADDLEASDEHSHGHAHGMSVMSVAPAGEEDLVRHRVISQVLELGVVVHSLIIGMSLGASDFPSTVRPLVPALTFHQFFEGIGLGGCIVQAKFRVRSVVTMALFFSLTTPAGIVVGIGISSVYDANSPTALVVQGLLEAAAAGILVYMALVDILAEDFMKTKVQRRGRLQLAMNVALLLGAGLMSMIAIWA</sequence>
<feature type="signal peptide" evidence="1">
    <location>
        <begin position="1"/>
        <end position="27"/>
    </location>
</feature>
<feature type="chain" id="PRO_0000398329" description="Zinc transporter 5">
    <location>
        <begin position="28"/>
        <end position="353"/>
    </location>
</feature>
<feature type="topological domain" description="Extracellular" evidence="1">
    <location>
        <begin position="28"/>
        <end position="48"/>
    </location>
</feature>
<feature type="transmembrane region" description="Helical" evidence="1">
    <location>
        <begin position="49"/>
        <end position="69"/>
    </location>
</feature>
<feature type="topological domain" description="Cytoplasmic" evidence="1">
    <location>
        <begin position="70"/>
        <end position="86"/>
    </location>
</feature>
<feature type="transmembrane region" description="Helical" evidence="1">
    <location>
        <begin position="87"/>
        <end position="107"/>
    </location>
</feature>
<feature type="topological domain" description="Extracellular" evidence="1">
    <location>
        <begin position="108"/>
        <end position="121"/>
    </location>
</feature>
<feature type="transmembrane region" description="Helical" evidence="1">
    <location>
        <begin position="122"/>
        <end position="142"/>
    </location>
</feature>
<feature type="topological domain" description="Cytoplasmic" evidence="1">
    <location>
        <begin position="143"/>
        <end position="198"/>
    </location>
</feature>
<feature type="transmembrane region" description="Helical" evidence="1">
    <location>
        <begin position="199"/>
        <end position="219"/>
    </location>
</feature>
<feature type="topological domain" description="Extracellular" evidence="1">
    <location>
        <begin position="220"/>
        <end position="230"/>
    </location>
</feature>
<feature type="transmembrane region" description="Helical" evidence="1">
    <location>
        <begin position="231"/>
        <end position="251"/>
    </location>
</feature>
<feature type="topological domain" description="Cytoplasmic" evidence="1">
    <location>
        <begin position="252"/>
        <end position="260"/>
    </location>
</feature>
<feature type="transmembrane region" description="Helical" evidence="1">
    <location>
        <begin position="261"/>
        <end position="281"/>
    </location>
</feature>
<feature type="topological domain" description="Extracellular" evidence="1">
    <location>
        <begin position="282"/>
        <end position="292"/>
    </location>
</feature>
<feature type="transmembrane region" description="Helical" evidence="1">
    <location>
        <begin position="293"/>
        <end position="313"/>
    </location>
</feature>
<feature type="topological domain" description="Cytoplasmic" evidence="1">
    <location>
        <begin position="314"/>
        <end position="332"/>
    </location>
</feature>
<feature type="transmembrane region" description="Helical" evidence="1">
    <location>
        <begin position="333"/>
        <end position="353"/>
    </location>
</feature>
<protein>
    <recommendedName>
        <fullName>Zinc transporter 5</fullName>
    </recommendedName>
    <alternativeName>
        <fullName>ZRT/IRT-like protein 5</fullName>
        <shortName>OsZIP5</shortName>
    </alternativeName>
</protein>
<reference key="1">
    <citation type="submission" date="2003-04" db="EMBL/GenBank/DDBJ databases">
        <title>Molecular characterization of a ZIP family in rice(Oryza sativa L.).</title>
        <authorList>
            <person name="Huang J."/>
            <person name="Zhang H."/>
        </authorList>
    </citation>
    <scope>NUCLEOTIDE SEQUENCE [MRNA]</scope>
    <source>
        <strain>cv. Jiu Caiqing</strain>
        <tissue>Root</tissue>
    </source>
</reference>
<reference key="2">
    <citation type="journal article" date="2005" name="J. Exp. Bot.">
        <title>OsZIP4, a novel zinc-regulated zinc transporter in rice.</title>
        <authorList>
            <person name="Ishimaru Y."/>
            <person name="Suzuki M."/>
            <person name="Kobayashi T."/>
            <person name="Takahashi M."/>
            <person name="Nakanishi H."/>
            <person name="Mori S."/>
            <person name="Nishizawa N.K."/>
        </authorList>
    </citation>
    <scope>NUCLEOTIDE SEQUENCE [MRNA]</scope>
</reference>
<reference key="3">
    <citation type="journal article" date="2005" name="Mol. Genet. Genomics">
        <title>A fine physical map of the rice chromosome 5.</title>
        <authorList>
            <person name="Cheng C.-H."/>
            <person name="Chung M.C."/>
            <person name="Liu S.-M."/>
            <person name="Chen S.-K."/>
            <person name="Kao F.Y."/>
            <person name="Lin S.-J."/>
            <person name="Hsiao S.-H."/>
            <person name="Tseng I.C."/>
            <person name="Hsing Y.-I.C."/>
            <person name="Wu H.-P."/>
            <person name="Chen C.-S."/>
            <person name="Shaw J.-F."/>
            <person name="Wu J."/>
            <person name="Matsumoto T."/>
            <person name="Sasaki T."/>
            <person name="Chen H.-C."/>
            <person name="Chow T.-Y."/>
        </authorList>
    </citation>
    <scope>NUCLEOTIDE SEQUENCE [LARGE SCALE GENOMIC DNA]</scope>
    <source>
        <strain>cv. Nipponbare</strain>
    </source>
</reference>
<reference key="4">
    <citation type="journal article" date="2005" name="Nature">
        <title>The map-based sequence of the rice genome.</title>
        <authorList>
            <consortium name="International rice genome sequencing project (IRGSP)"/>
        </authorList>
    </citation>
    <scope>NUCLEOTIDE SEQUENCE [LARGE SCALE GENOMIC DNA]</scope>
    <source>
        <strain>cv. Nipponbare</strain>
    </source>
</reference>
<reference key="5">
    <citation type="journal article" date="2008" name="Nucleic Acids Res.">
        <title>The rice annotation project database (RAP-DB): 2008 update.</title>
        <authorList>
            <consortium name="The rice annotation project (RAP)"/>
        </authorList>
    </citation>
    <scope>GENOME REANNOTATION</scope>
    <source>
        <strain>cv. Nipponbare</strain>
    </source>
</reference>
<reference key="6">
    <citation type="journal article" date="2013" name="Rice">
        <title>Improvement of the Oryza sativa Nipponbare reference genome using next generation sequence and optical map data.</title>
        <authorList>
            <person name="Kawahara Y."/>
            <person name="de la Bastide M."/>
            <person name="Hamilton J.P."/>
            <person name="Kanamori H."/>
            <person name="McCombie W.R."/>
            <person name="Ouyang S."/>
            <person name="Schwartz D.C."/>
            <person name="Tanaka T."/>
            <person name="Wu J."/>
            <person name="Zhou S."/>
            <person name="Childs K.L."/>
            <person name="Davidson R.M."/>
            <person name="Lin H."/>
            <person name="Quesada-Ocampo L."/>
            <person name="Vaillancourt B."/>
            <person name="Sakai H."/>
            <person name="Lee S.S."/>
            <person name="Kim J."/>
            <person name="Numa H."/>
            <person name="Itoh T."/>
            <person name="Buell C.R."/>
            <person name="Matsumoto T."/>
        </authorList>
    </citation>
    <scope>GENOME REANNOTATION</scope>
    <source>
        <strain>cv. Nipponbare</strain>
    </source>
</reference>
<reference key="7">
    <citation type="journal article" date="2003" name="Science">
        <title>Collection, mapping, and annotation of over 28,000 cDNA clones from japonica rice.</title>
        <authorList>
            <consortium name="The rice full-length cDNA consortium"/>
        </authorList>
    </citation>
    <scope>NUCLEOTIDE SEQUENCE [LARGE SCALE MRNA]</scope>
    <source>
        <strain>cv. Nipponbare</strain>
    </source>
</reference>
<reference key="8">
    <citation type="journal article" date="2010" name="Plant Mol. Biol.">
        <title>OsZIP5 is a plasma membrane zinc transporter in rice.</title>
        <authorList>
            <person name="Lee S."/>
            <person name="Jeong H.J."/>
            <person name="Kim S.A."/>
            <person name="Lee J."/>
            <person name="Guerinot M.L."/>
            <person name="An G."/>
        </authorList>
    </citation>
    <scope>FUNCTION</scope>
    <scope>SUBCELLULAR LOCATION</scope>
    <scope>INDUCTION</scope>
    <scope>DISRUPTION PHENOTYPE</scope>
</reference>
<evidence type="ECO:0000255" key="1"/>
<evidence type="ECO:0000269" key="2">
    <source>
    </source>
</evidence>
<evidence type="ECO:0000305" key="3"/>
<organism>
    <name type="scientific">Oryza sativa subsp. japonica</name>
    <name type="common">Rice</name>
    <dbReference type="NCBI Taxonomy" id="39947"/>
    <lineage>
        <taxon>Eukaryota</taxon>
        <taxon>Viridiplantae</taxon>
        <taxon>Streptophyta</taxon>
        <taxon>Embryophyta</taxon>
        <taxon>Tracheophyta</taxon>
        <taxon>Spermatophyta</taxon>
        <taxon>Magnoliopsida</taxon>
        <taxon>Liliopsida</taxon>
        <taxon>Poales</taxon>
        <taxon>Poaceae</taxon>
        <taxon>BOP clade</taxon>
        <taxon>Oryzoideae</taxon>
        <taxon>Oryzeae</taxon>
        <taxon>Oryzinae</taxon>
        <taxon>Oryza</taxon>
        <taxon>Oryza sativa</taxon>
    </lineage>
</organism>
<keyword id="KW-1003">Cell membrane</keyword>
<keyword id="KW-0406">Ion transport</keyword>
<keyword id="KW-0472">Membrane</keyword>
<keyword id="KW-1185">Reference proteome</keyword>
<keyword id="KW-0732">Signal</keyword>
<keyword id="KW-0812">Transmembrane</keyword>
<keyword id="KW-1133">Transmembrane helix</keyword>
<keyword id="KW-0813">Transport</keyword>
<keyword id="KW-0862">Zinc</keyword>
<keyword id="KW-0864">Zinc transport</keyword>
<accession>Q6L8G0</accession>
<accession>A0A0P0WNH4</accession>
<accession>Q7Y247</accession>
<name>ZIP5_ORYSJ</name>
<proteinExistence type="evidence at transcript level"/>
<gene>
    <name type="primary">ZIP5</name>
    <name type="synonym">ZIP2</name>
    <name type="ordered locus">Os05g0472700</name>
    <name type="ordered locus">LOC_Os05g39560</name>
    <name type="ORF">P0015C02.14</name>
    <name type="ORF">P0486C01.1</name>
</gene>
<dbReference type="EMBL" id="AY281300">
    <property type="protein sequence ID" value="AAP33800.1"/>
    <property type="molecule type" value="mRNA"/>
</dbReference>
<dbReference type="EMBL" id="AB126087">
    <property type="protein sequence ID" value="BAD18965.1"/>
    <property type="molecule type" value="mRNA"/>
</dbReference>
<dbReference type="EMBL" id="AC135423">
    <property type="protein sequence ID" value="AAT94022.1"/>
    <property type="molecule type" value="Genomic_DNA"/>
</dbReference>
<dbReference type="EMBL" id="AC135924">
    <property type="protein sequence ID" value="AAU44233.1"/>
    <property type="molecule type" value="Genomic_DNA"/>
</dbReference>
<dbReference type="EMBL" id="AP008211">
    <property type="protein sequence ID" value="BAF17732.1"/>
    <property type="molecule type" value="Genomic_DNA"/>
</dbReference>
<dbReference type="EMBL" id="AP014961">
    <property type="protein sequence ID" value="BAS94503.1"/>
    <property type="molecule type" value="Genomic_DNA"/>
</dbReference>
<dbReference type="EMBL" id="AK070864">
    <property type="protein sequence ID" value="BAG92180.1"/>
    <property type="molecule type" value="mRNA"/>
</dbReference>
<dbReference type="RefSeq" id="XP_015637510.1">
    <property type="nucleotide sequence ID" value="XM_015782024.1"/>
</dbReference>
<dbReference type="SMR" id="Q6L8G0"/>
<dbReference type="FunCoup" id="Q6L8G0">
    <property type="interactions" value="1982"/>
</dbReference>
<dbReference type="STRING" id="39947.Q6L8G0"/>
<dbReference type="PaxDb" id="39947-Q6L8G0"/>
<dbReference type="EnsemblPlants" id="Os05t0472700-01">
    <property type="protein sequence ID" value="Os05t0472700-01"/>
    <property type="gene ID" value="Os05g0472700"/>
</dbReference>
<dbReference type="Gramene" id="Os05t0472700-01">
    <property type="protein sequence ID" value="Os05t0472700-01"/>
    <property type="gene ID" value="Os05g0472700"/>
</dbReference>
<dbReference type="KEGG" id="dosa:Os05g0472700"/>
<dbReference type="eggNOG" id="KOG1558">
    <property type="taxonomic scope" value="Eukaryota"/>
</dbReference>
<dbReference type="HOGENOM" id="CLU_027089_3_0_1"/>
<dbReference type="InParanoid" id="Q6L8G0"/>
<dbReference type="OMA" id="ISEYPWV"/>
<dbReference type="OrthoDB" id="448280at2759"/>
<dbReference type="Proteomes" id="UP000000763">
    <property type="component" value="Chromosome 5"/>
</dbReference>
<dbReference type="Proteomes" id="UP000059680">
    <property type="component" value="Chromosome 5"/>
</dbReference>
<dbReference type="GO" id="GO:0005886">
    <property type="term" value="C:plasma membrane"/>
    <property type="evidence" value="ECO:0000314"/>
    <property type="project" value="UniProtKB"/>
</dbReference>
<dbReference type="GO" id="GO:0005385">
    <property type="term" value="F:zinc ion transmembrane transporter activity"/>
    <property type="evidence" value="ECO:0000318"/>
    <property type="project" value="GO_Central"/>
</dbReference>
<dbReference type="GO" id="GO:0071577">
    <property type="term" value="P:zinc ion transmembrane transport"/>
    <property type="evidence" value="ECO:0000318"/>
    <property type="project" value="GO_Central"/>
</dbReference>
<dbReference type="GO" id="GO:0006829">
    <property type="term" value="P:zinc ion transport"/>
    <property type="evidence" value="ECO:0000315"/>
    <property type="project" value="UniProtKB"/>
</dbReference>
<dbReference type="InterPro" id="IPR003689">
    <property type="entry name" value="ZIP"/>
</dbReference>
<dbReference type="InterPro" id="IPR004698">
    <property type="entry name" value="Zn/Fe_permease_fun/pln"/>
</dbReference>
<dbReference type="NCBIfam" id="TIGR00820">
    <property type="entry name" value="zip"/>
    <property type="match status" value="1"/>
</dbReference>
<dbReference type="PANTHER" id="PTHR11040:SF67">
    <property type="entry name" value="ZINC TRANSPORTER 5"/>
    <property type="match status" value="1"/>
</dbReference>
<dbReference type="PANTHER" id="PTHR11040">
    <property type="entry name" value="ZINC/IRON TRANSPORTER"/>
    <property type="match status" value="1"/>
</dbReference>
<dbReference type="Pfam" id="PF02535">
    <property type="entry name" value="Zip"/>
    <property type="match status" value="1"/>
</dbReference>